<accession>B0TQP2</accession>
<dbReference type="EC" id="3.5.1.108" evidence="1"/>
<dbReference type="EMBL" id="CP000931">
    <property type="protein sequence ID" value="ABZ75035.1"/>
    <property type="molecule type" value="Genomic_DNA"/>
</dbReference>
<dbReference type="RefSeq" id="WP_012275589.1">
    <property type="nucleotide sequence ID" value="NC_010334.1"/>
</dbReference>
<dbReference type="SMR" id="B0TQP2"/>
<dbReference type="STRING" id="458817.Shal_0460"/>
<dbReference type="KEGG" id="shl:Shal_0460"/>
<dbReference type="eggNOG" id="COG0774">
    <property type="taxonomic scope" value="Bacteria"/>
</dbReference>
<dbReference type="HOGENOM" id="CLU_046528_1_0_6"/>
<dbReference type="OrthoDB" id="9802746at2"/>
<dbReference type="UniPathway" id="UPA00359">
    <property type="reaction ID" value="UER00478"/>
</dbReference>
<dbReference type="Proteomes" id="UP000001317">
    <property type="component" value="Chromosome"/>
</dbReference>
<dbReference type="GO" id="GO:0016020">
    <property type="term" value="C:membrane"/>
    <property type="evidence" value="ECO:0007669"/>
    <property type="project" value="GOC"/>
</dbReference>
<dbReference type="GO" id="GO:0046872">
    <property type="term" value="F:metal ion binding"/>
    <property type="evidence" value="ECO:0007669"/>
    <property type="project" value="UniProtKB-KW"/>
</dbReference>
<dbReference type="GO" id="GO:0103117">
    <property type="term" value="F:UDP-3-O-acyl-N-acetylglucosamine deacetylase activity"/>
    <property type="evidence" value="ECO:0007669"/>
    <property type="project" value="UniProtKB-UniRule"/>
</dbReference>
<dbReference type="GO" id="GO:0009245">
    <property type="term" value="P:lipid A biosynthetic process"/>
    <property type="evidence" value="ECO:0007669"/>
    <property type="project" value="UniProtKB-UniRule"/>
</dbReference>
<dbReference type="Gene3D" id="3.30.230.20">
    <property type="entry name" value="lpxc deacetylase, domain 1"/>
    <property type="match status" value="1"/>
</dbReference>
<dbReference type="Gene3D" id="3.30.1700.10">
    <property type="entry name" value="lpxc deacetylase, domain 2"/>
    <property type="match status" value="1"/>
</dbReference>
<dbReference type="HAMAP" id="MF_00388">
    <property type="entry name" value="LpxC"/>
    <property type="match status" value="1"/>
</dbReference>
<dbReference type="InterPro" id="IPR020568">
    <property type="entry name" value="Ribosomal_Su5_D2-typ_SF"/>
</dbReference>
<dbReference type="InterPro" id="IPR004463">
    <property type="entry name" value="UDP-acyl_GlcNac_deAcase"/>
</dbReference>
<dbReference type="InterPro" id="IPR011334">
    <property type="entry name" value="UDP-acyl_GlcNac_deAcase_C"/>
</dbReference>
<dbReference type="InterPro" id="IPR015870">
    <property type="entry name" value="UDP-acyl_N-AcGlcN_deAcase_N"/>
</dbReference>
<dbReference type="NCBIfam" id="TIGR00325">
    <property type="entry name" value="lpxC"/>
    <property type="match status" value="1"/>
</dbReference>
<dbReference type="PANTHER" id="PTHR33694">
    <property type="entry name" value="UDP-3-O-ACYL-N-ACETYLGLUCOSAMINE DEACETYLASE 1, MITOCHONDRIAL-RELATED"/>
    <property type="match status" value="1"/>
</dbReference>
<dbReference type="PANTHER" id="PTHR33694:SF1">
    <property type="entry name" value="UDP-3-O-ACYL-N-ACETYLGLUCOSAMINE DEACETYLASE 1, MITOCHONDRIAL-RELATED"/>
    <property type="match status" value="1"/>
</dbReference>
<dbReference type="Pfam" id="PF03331">
    <property type="entry name" value="LpxC"/>
    <property type="match status" value="1"/>
</dbReference>
<dbReference type="SUPFAM" id="SSF54211">
    <property type="entry name" value="Ribosomal protein S5 domain 2-like"/>
    <property type="match status" value="2"/>
</dbReference>
<comment type="function">
    <text evidence="1">Catalyzes the hydrolysis of UDP-3-O-myristoyl-N-acetylglucosamine to form UDP-3-O-myristoylglucosamine and acetate, the committed step in lipid A biosynthesis.</text>
</comment>
<comment type="catalytic activity">
    <reaction evidence="1">
        <text>a UDP-3-O-[(3R)-3-hydroxyacyl]-N-acetyl-alpha-D-glucosamine + H2O = a UDP-3-O-[(3R)-3-hydroxyacyl]-alpha-D-glucosamine + acetate</text>
        <dbReference type="Rhea" id="RHEA:67816"/>
        <dbReference type="ChEBI" id="CHEBI:15377"/>
        <dbReference type="ChEBI" id="CHEBI:30089"/>
        <dbReference type="ChEBI" id="CHEBI:137740"/>
        <dbReference type="ChEBI" id="CHEBI:173225"/>
        <dbReference type="EC" id="3.5.1.108"/>
    </reaction>
</comment>
<comment type="cofactor">
    <cofactor evidence="1">
        <name>Zn(2+)</name>
        <dbReference type="ChEBI" id="CHEBI:29105"/>
    </cofactor>
</comment>
<comment type="pathway">
    <text evidence="1">Glycolipid biosynthesis; lipid IV(A) biosynthesis; lipid IV(A) from (3R)-3-hydroxytetradecanoyl-[acyl-carrier-protein] and UDP-N-acetyl-alpha-D-glucosamine: step 2/6.</text>
</comment>
<comment type="similarity">
    <text evidence="1">Belongs to the LpxC family.</text>
</comment>
<evidence type="ECO:0000255" key="1">
    <source>
        <dbReference type="HAMAP-Rule" id="MF_00388"/>
    </source>
</evidence>
<proteinExistence type="inferred from homology"/>
<gene>
    <name evidence="1" type="primary">lpxC</name>
    <name type="ordered locus">Shal_0460</name>
</gene>
<feature type="chain" id="PRO_1000080228" description="UDP-3-O-acyl-N-acetylglucosamine deacetylase">
    <location>
        <begin position="1"/>
        <end position="306"/>
    </location>
</feature>
<feature type="active site" description="Proton donor" evidence="1">
    <location>
        <position position="265"/>
    </location>
</feature>
<feature type="binding site" evidence="1">
    <location>
        <position position="79"/>
    </location>
    <ligand>
        <name>Zn(2+)</name>
        <dbReference type="ChEBI" id="CHEBI:29105"/>
    </ligand>
</feature>
<feature type="binding site" evidence="1">
    <location>
        <position position="238"/>
    </location>
    <ligand>
        <name>Zn(2+)</name>
        <dbReference type="ChEBI" id="CHEBI:29105"/>
    </ligand>
</feature>
<feature type="binding site" evidence="1">
    <location>
        <position position="242"/>
    </location>
    <ligand>
        <name>Zn(2+)</name>
        <dbReference type="ChEBI" id="CHEBI:29105"/>
    </ligand>
</feature>
<organism>
    <name type="scientific">Shewanella halifaxensis (strain HAW-EB4)</name>
    <dbReference type="NCBI Taxonomy" id="458817"/>
    <lineage>
        <taxon>Bacteria</taxon>
        <taxon>Pseudomonadati</taxon>
        <taxon>Pseudomonadota</taxon>
        <taxon>Gammaproteobacteria</taxon>
        <taxon>Alteromonadales</taxon>
        <taxon>Shewanellaceae</taxon>
        <taxon>Shewanella</taxon>
    </lineage>
</organism>
<keyword id="KW-0378">Hydrolase</keyword>
<keyword id="KW-0441">Lipid A biosynthesis</keyword>
<keyword id="KW-0444">Lipid biosynthesis</keyword>
<keyword id="KW-0443">Lipid metabolism</keyword>
<keyword id="KW-0479">Metal-binding</keyword>
<keyword id="KW-0862">Zinc</keyword>
<reference key="1">
    <citation type="submission" date="2008-01" db="EMBL/GenBank/DDBJ databases">
        <title>Complete sequence of Shewanella halifaxensis HAW-EB4.</title>
        <authorList>
            <consortium name="US DOE Joint Genome Institute"/>
            <person name="Copeland A."/>
            <person name="Lucas S."/>
            <person name="Lapidus A."/>
            <person name="Glavina del Rio T."/>
            <person name="Dalin E."/>
            <person name="Tice H."/>
            <person name="Bruce D."/>
            <person name="Goodwin L."/>
            <person name="Pitluck S."/>
            <person name="Sims D."/>
            <person name="Brettin T."/>
            <person name="Detter J.C."/>
            <person name="Han C."/>
            <person name="Kuske C.R."/>
            <person name="Schmutz J."/>
            <person name="Larimer F."/>
            <person name="Land M."/>
            <person name="Hauser L."/>
            <person name="Kyrpides N."/>
            <person name="Kim E."/>
            <person name="Zhao J.-S."/>
            <person name="Richardson P."/>
        </authorList>
    </citation>
    <scope>NUCLEOTIDE SEQUENCE [LARGE SCALE GENOMIC DNA]</scope>
    <source>
        <strain>HAW-EB4</strain>
    </source>
</reference>
<sequence length="306" mass="33605">MIFQRTVKEMVKTTGVGLHSGNKVTLTIKPAPVNTGIKLVRTDLSPAVEIPAVADQVRETTMCTALVNDDGVRISTIEHLFAALAGLGIDNAVIEVDAPEIPIMDGSASPFVFLLQSVGIQEQSAAKKYIKITKPIRVEDGDKWAELKPFKGFRVDFAIDFNHPEIARSQQHMVMDFSSSAFIKDISRARTFGFMRDIEYLRANNLALGGSMENAVVLDEYRVLNPDGLRYEDEFVKHKILDAFGDLYVAGHAIVGEFCAFKTGHALNNQLVRAMLAQQDAWEIVSFEKEADAPVSFSVPAGAVFA</sequence>
<name>LPXC_SHEHH</name>
<protein>
    <recommendedName>
        <fullName evidence="1">UDP-3-O-acyl-N-acetylglucosamine deacetylase</fullName>
        <shortName evidence="1">UDP-3-O-acyl-GlcNAc deacetylase</shortName>
        <ecNumber evidence="1">3.5.1.108</ecNumber>
    </recommendedName>
    <alternativeName>
        <fullName evidence="1">UDP-3-O-[R-3-hydroxymyristoyl]-N-acetylglucosamine deacetylase</fullName>
    </alternativeName>
</protein>